<organism>
    <name type="scientific">Trieres chinensis</name>
    <name type="common">Marine centric diatom</name>
    <name type="synonym">Odontella sinensis</name>
    <dbReference type="NCBI Taxonomy" id="1514140"/>
    <lineage>
        <taxon>Eukaryota</taxon>
        <taxon>Sar</taxon>
        <taxon>Stramenopiles</taxon>
        <taxon>Ochrophyta</taxon>
        <taxon>Bacillariophyta</taxon>
        <taxon>Mediophyceae</taxon>
        <taxon>Biddulphiophycidae</taxon>
        <taxon>Eupodiscales</taxon>
        <taxon>Parodontellaceae</taxon>
        <taxon>Trieres</taxon>
    </lineage>
</organism>
<feature type="chain" id="PRO_0000131776" description="Protein translocase subunit SecY">
    <location>
        <begin position="1"/>
        <end position="425"/>
    </location>
</feature>
<feature type="transmembrane region" description="Helical" evidence="2">
    <location>
        <begin position="15"/>
        <end position="35"/>
    </location>
</feature>
<feature type="transmembrane region" description="Helical" evidence="2">
    <location>
        <begin position="62"/>
        <end position="82"/>
    </location>
</feature>
<feature type="transmembrane region" description="Helical" evidence="2">
    <location>
        <begin position="113"/>
        <end position="131"/>
    </location>
</feature>
<feature type="transmembrane region" description="Helical" evidence="2">
    <location>
        <begin position="139"/>
        <end position="159"/>
    </location>
</feature>
<feature type="transmembrane region" description="Helical" evidence="2">
    <location>
        <begin position="168"/>
        <end position="188"/>
    </location>
</feature>
<feature type="transmembrane region" description="Helical" evidence="2">
    <location>
        <begin position="201"/>
        <end position="221"/>
    </location>
</feature>
<feature type="transmembrane region" description="Helical" evidence="2">
    <location>
        <begin position="266"/>
        <end position="286"/>
    </location>
</feature>
<feature type="transmembrane region" description="Helical" evidence="2">
    <location>
        <begin position="304"/>
        <end position="324"/>
    </location>
</feature>
<feature type="transmembrane region" description="Helical" evidence="2">
    <location>
        <begin position="364"/>
        <end position="384"/>
    </location>
</feature>
<feature type="transmembrane region" description="Helical" evidence="2">
    <location>
        <begin position="385"/>
        <end position="405"/>
    </location>
</feature>
<geneLocation type="chloroplast"/>
<accession>P49461</accession>
<sequence>MKQTDDKDSLLNRLLLSLGILLFIRMGTFLPVPGIDHGHLEFYIERHFRLRTLVSTFAGDNTVVVGLFTLNIFPYINASIIMQLLVSLLPGLSKLQKEGGAEARRSINSLTRLLTLGWSLIQSTSVAFYLKRALFEWNLVLAFEIVIWLTTGAMIVLWLSEIITEYGLGNGPSLLIYTNIVSSLPGFVKQVITESSGKVPIGSWLLSGFVLFVALYGIVLLQEGMRKVYLISSKQLNQTSLPFSGSSNLESGYYIPLRFNQAGVMPIILTTAVLVIPTFIYNLGLLRILTPLITLPVFVKSYKIIYWVSYFVLILLFSLFYSTIVVNPKDLSDELQKMAVSIPGIRPGVETTFYLKQVMKRVTLLGAIMLALLATLPNIIQAILSLSGFTNLGTTSLLILVGVILDLTREMRSIILSNIYYDMFD</sequence>
<protein>
    <recommendedName>
        <fullName evidence="2">Protein translocase subunit SecY</fullName>
    </recommendedName>
</protein>
<keyword id="KW-0150">Chloroplast</keyword>
<keyword id="KW-0472">Membrane</keyword>
<keyword id="KW-0934">Plastid</keyword>
<keyword id="KW-0653">Protein transport</keyword>
<keyword id="KW-0793">Thylakoid</keyword>
<keyword id="KW-0811">Translocation</keyword>
<keyword id="KW-0812">Transmembrane</keyword>
<keyword id="KW-1133">Transmembrane helix</keyword>
<keyword id="KW-0813">Transport</keyword>
<dbReference type="EMBL" id="Z67753">
    <property type="protein sequence ID" value="CAA91631.1"/>
    <property type="molecule type" value="Genomic_DNA"/>
</dbReference>
<dbReference type="PIR" id="S78258">
    <property type="entry name" value="S78258"/>
</dbReference>
<dbReference type="RefSeq" id="NP_043599.1">
    <property type="nucleotide sequence ID" value="NC_001713.1"/>
</dbReference>
<dbReference type="GeneID" id="801757"/>
<dbReference type="GO" id="GO:0009535">
    <property type="term" value="C:chloroplast thylakoid membrane"/>
    <property type="evidence" value="ECO:0007669"/>
    <property type="project" value="UniProtKB-SubCell"/>
</dbReference>
<dbReference type="GO" id="GO:0065002">
    <property type="term" value="P:intracellular protein transmembrane transport"/>
    <property type="evidence" value="ECO:0007669"/>
    <property type="project" value="UniProtKB-UniRule"/>
</dbReference>
<dbReference type="GO" id="GO:0006605">
    <property type="term" value="P:protein targeting"/>
    <property type="evidence" value="ECO:0007669"/>
    <property type="project" value="UniProtKB-UniRule"/>
</dbReference>
<dbReference type="Gene3D" id="1.10.3370.10">
    <property type="entry name" value="SecY subunit domain"/>
    <property type="match status" value="1"/>
</dbReference>
<dbReference type="HAMAP" id="MF_01465">
    <property type="entry name" value="SecY"/>
    <property type="match status" value="1"/>
</dbReference>
<dbReference type="InterPro" id="IPR026593">
    <property type="entry name" value="SecY"/>
</dbReference>
<dbReference type="InterPro" id="IPR002208">
    <property type="entry name" value="SecY/SEC61-alpha"/>
</dbReference>
<dbReference type="InterPro" id="IPR030659">
    <property type="entry name" value="SecY_CS"/>
</dbReference>
<dbReference type="InterPro" id="IPR023201">
    <property type="entry name" value="SecY_dom_sf"/>
</dbReference>
<dbReference type="NCBIfam" id="TIGR00967">
    <property type="entry name" value="3a0501s007"/>
    <property type="match status" value="1"/>
</dbReference>
<dbReference type="PANTHER" id="PTHR10906">
    <property type="entry name" value="SECY/SEC61-ALPHA FAMILY MEMBER"/>
    <property type="match status" value="1"/>
</dbReference>
<dbReference type="Pfam" id="PF00344">
    <property type="entry name" value="SecY"/>
    <property type="match status" value="1"/>
</dbReference>
<dbReference type="PIRSF" id="PIRSF004557">
    <property type="entry name" value="SecY"/>
    <property type="match status" value="1"/>
</dbReference>
<dbReference type="PRINTS" id="PR00303">
    <property type="entry name" value="SECYTRNLCASE"/>
</dbReference>
<dbReference type="SUPFAM" id="SSF103491">
    <property type="entry name" value="Preprotein translocase SecY subunit"/>
    <property type="match status" value="1"/>
</dbReference>
<dbReference type="PROSITE" id="PS00755">
    <property type="entry name" value="SECY_1"/>
    <property type="match status" value="1"/>
</dbReference>
<dbReference type="PROSITE" id="PS00756">
    <property type="entry name" value="SECY_2"/>
    <property type="match status" value="1"/>
</dbReference>
<proteinExistence type="inferred from homology"/>
<reference key="1">
    <citation type="journal article" date="1995" name="Plant Mol. Biol. Rep.">
        <title>The chloroplast genome of a chlorophyll a+c-containing alga, Odontella sinensis.</title>
        <authorList>
            <person name="Kowallik K.V."/>
            <person name="Stoebe B."/>
            <person name="Schaffran I."/>
            <person name="Kroth-Pancic P."/>
            <person name="Freier U."/>
        </authorList>
    </citation>
    <scope>NUCLEOTIDE SEQUENCE [LARGE SCALE GENOMIC DNA]</scope>
</reference>
<name>SECY_TRICV</name>
<gene>
    <name evidence="2" type="primary">secY</name>
</gene>
<evidence type="ECO:0000250" key="1"/>
<evidence type="ECO:0000255" key="2">
    <source>
        <dbReference type="HAMAP-Rule" id="MF_01465"/>
    </source>
</evidence>
<comment type="function">
    <text evidence="2">The central subunit of the protein translocation channel SecYE. Consists of two halves formed by TMs 1-5 and 6-10. These two domains form a lateral gate at the front which open onto the bilayer between TMs 2 and 7, and are clamped together by SecE at the back. The channel is closed by both a pore ring composed of hydrophobic SecY resides and a short helix (helix 2A) on the extracellular side of the membrane which forms a plug.</text>
</comment>
<comment type="subunit">
    <text evidence="1">Component of the plastid Sec protein translocase complex, which is composed of at least SecY, SecE and SecG.</text>
</comment>
<comment type="subcellular location">
    <subcellularLocation>
        <location evidence="2">Plastid</location>
        <location evidence="2">Chloroplast thylakoid membrane</location>
        <topology evidence="2">Multi-pass membrane protein</topology>
    </subcellularLocation>
</comment>
<comment type="similarity">
    <text evidence="2">Belongs to the SecY/SEC61-alpha family.</text>
</comment>